<evidence type="ECO:0000255" key="1">
    <source>
        <dbReference type="HAMAP-Rule" id="MF_01332"/>
    </source>
</evidence>
<sequence length="170" mass="18875">MSGILTRWRQFGKRYFWPHLLLGMVAASLGLPALSNAAEPNAPAKATTRNHEPSAKVNFGQLALLEANTRRPNSNYSVDYWHQHAIRTVIRHLSFAMAPQTLPVAEESLPLQAQHLALLDTLSALLTQEGTPSEKGYRIDYAHFTPQAKFSTPVWISHAQGIRAGPQRLS</sequence>
<gene>
    <name evidence="1" type="primary">secM</name>
    <name type="ordered locus">E2348C_0102</name>
</gene>
<keyword id="KW-0963">Cytoplasm</keyword>
<keyword id="KW-0574">Periplasm</keyword>
<keyword id="KW-1185">Reference proteome</keyword>
<keyword id="KW-0732">Signal</keyword>
<organism>
    <name type="scientific">Escherichia coli O127:H6 (strain E2348/69 / EPEC)</name>
    <dbReference type="NCBI Taxonomy" id="574521"/>
    <lineage>
        <taxon>Bacteria</taxon>
        <taxon>Pseudomonadati</taxon>
        <taxon>Pseudomonadota</taxon>
        <taxon>Gammaproteobacteria</taxon>
        <taxon>Enterobacterales</taxon>
        <taxon>Enterobacteriaceae</taxon>
        <taxon>Escherichia</taxon>
    </lineage>
</organism>
<proteinExistence type="inferred from homology"/>
<reference key="1">
    <citation type="journal article" date="2009" name="J. Bacteriol.">
        <title>Complete genome sequence and comparative genome analysis of enteropathogenic Escherichia coli O127:H6 strain E2348/69.</title>
        <authorList>
            <person name="Iguchi A."/>
            <person name="Thomson N.R."/>
            <person name="Ogura Y."/>
            <person name="Saunders D."/>
            <person name="Ooka T."/>
            <person name="Henderson I.R."/>
            <person name="Harris D."/>
            <person name="Asadulghani M."/>
            <person name="Kurokawa K."/>
            <person name="Dean P."/>
            <person name="Kenny B."/>
            <person name="Quail M.A."/>
            <person name="Thurston S."/>
            <person name="Dougan G."/>
            <person name="Hayashi T."/>
            <person name="Parkhill J."/>
            <person name="Frankel G."/>
        </authorList>
    </citation>
    <scope>NUCLEOTIDE SEQUENCE [LARGE SCALE GENOMIC DNA]</scope>
    <source>
        <strain>E2348/69 / EPEC</strain>
    </source>
</reference>
<comment type="function">
    <text evidence="1">Regulates secA expression by translational coupling of the secM secA operon. Translational pausing at a specific Pro residue 5 residues before the end of the protein may allow disruption of a mRNA repressor helix that normally suppresses secA translation initiation.</text>
</comment>
<comment type="subcellular location">
    <subcellularLocation>
        <location evidence="1">Cytoplasm</location>
        <location evidence="1">Cytosol</location>
    </subcellularLocation>
    <subcellularLocation>
        <location evidence="1">Periplasm</location>
    </subcellularLocation>
    <text evidence="1">The active form is cytosolic, while the periplasmic form is rapidly degraded, mainly by the tail-specific protease.</text>
</comment>
<comment type="similarity">
    <text evidence="1">Belongs to the SecM family.</text>
</comment>
<name>SECM_ECO27</name>
<protein>
    <recommendedName>
        <fullName evidence="1">Secretion monitor</fullName>
    </recommendedName>
</protein>
<feature type="signal peptide" evidence="1">
    <location>
        <begin position="1"/>
        <end position="37"/>
    </location>
</feature>
<feature type="chain" id="PRO_1000166095" description="Secretion monitor">
    <location>
        <begin position="38"/>
        <end position="170"/>
    </location>
</feature>
<accession>B7UIE7</accession>
<dbReference type="EMBL" id="FM180568">
    <property type="protein sequence ID" value="CAS07650.1"/>
    <property type="molecule type" value="Genomic_DNA"/>
</dbReference>
<dbReference type="RefSeq" id="WP_000014318.1">
    <property type="nucleotide sequence ID" value="NC_011601.1"/>
</dbReference>
<dbReference type="KEGG" id="ecg:E2348C_0102"/>
<dbReference type="HOGENOM" id="CLU_108853_0_0_6"/>
<dbReference type="Proteomes" id="UP000008205">
    <property type="component" value="Chromosome"/>
</dbReference>
<dbReference type="GO" id="GO:0005829">
    <property type="term" value="C:cytosol"/>
    <property type="evidence" value="ECO:0007669"/>
    <property type="project" value="UniProtKB-SubCell"/>
</dbReference>
<dbReference type="GO" id="GO:0042597">
    <property type="term" value="C:periplasmic space"/>
    <property type="evidence" value="ECO:0007669"/>
    <property type="project" value="UniProtKB-SubCell"/>
</dbReference>
<dbReference type="GO" id="GO:0045182">
    <property type="term" value="F:translation regulator activity"/>
    <property type="evidence" value="ECO:0007669"/>
    <property type="project" value="InterPro"/>
</dbReference>
<dbReference type="HAMAP" id="MF_01332">
    <property type="entry name" value="SecM"/>
    <property type="match status" value="1"/>
</dbReference>
<dbReference type="InterPro" id="IPR009502">
    <property type="entry name" value="SecM"/>
</dbReference>
<dbReference type="NCBIfam" id="NF002799">
    <property type="entry name" value="PRK02943.1-1"/>
    <property type="match status" value="1"/>
</dbReference>
<dbReference type="Pfam" id="PF06558">
    <property type="entry name" value="SecM"/>
    <property type="match status" value="1"/>
</dbReference>
<dbReference type="PIRSF" id="PIRSF004572">
    <property type="entry name" value="SecM"/>
    <property type="match status" value="1"/>
</dbReference>